<sequence>MSKLDEKKQLKCSFCGKTQDQVRRLIAGPGVYICDECIELCSEIINDEFEDDIQVDLTSLPKPTEIKTYLDQYVIGQEDAKKSLSVAVYNHYKRINSNTNNDDVELQKSNILLLGPTGSGKTLLAQTLAKFLNVPFAIADATTLTEAGYVGEDVENILLKLIQNADYDIEKAEKGIVYIDEIDKIARKSENPSITRDVSGEGVQQALLKILEGTVAAVPPQGGRKHPHQEFIQINTTNILFICGGAFDGVDKIIERRTRTSSLGFGAEIQSKKEKDLGKLLKDIMPGDLLKFGLIPEFIGRLPIVVTLDKLDREALIKILTEPKNALVKQYKKLFELDDVELEFNQEALKEIADEAINRNTGARGLRAIIEDMMREIMFDIPSQENIGKVIVNEDCIKTKKPELIEAEGGKRLPIKPKKGKKRKDSETA</sequence>
<gene>
    <name evidence="1" type="primary">clpX</name>
    <name type="ordered locus">CBO3230</name>
    <name type="ordered locus">CLC_3141</name>
</gene>
<name>CLPX_CLOBH</name>
<protein>
    <recommendedName>
        <fullName evidence="1">ATP-dependent Clp protease ATP-binding subunit ClpX</fullName>
    </recommendedName>
</protein>
<evidence type="ECO:0000255" key="1">
    <source>
        <dbReference type="HAMAP-Rule" id="MF_00175"/>
    </source>
</evidence>
<evidence type="ECO:0000255" key="2">
    <source>
        <dbReference type="PROSITE-ProRule" id="PRU01250"/>
    </source>
</evidence>
<evidence type="ECO:0000256" key="3">
    <source>
        <dbReference type="SAM" id="MobiDB-lite"/>
    </source>
</evidence>
<reference key="1">
    <citation type="journal article" date="2007" name="Genome Res.">
        <title>Genome sequence of a proteolytic (Group I) Clostridium botulinum strain Hall A and comparative analysis of the clostridial genomes.</title>
        <authorList>
            <person name="Sebaihia M."/>
            <person name="Peck M.W."/>
            <person name="Minton N.P."/>
            <person name="Thomson N.R."/>
            <person name="Holden M.T.G."/>
            <person name="Mitchell W.J."/>
            <person name="Carter A.T."/>
            <person name="Bentley S.D."/>
            <person name="Mason D.R."/>
            <person name="Crossman L."/>
            <person name="Paul C.J."/>
            <person name="Ivens A."/>
            <person name="Wells-Bennik M.H.J."/>
            <person name="Davis I.J."/>
            <person name="Cerdeno-Tarraga A.M."/>
            <person name="Churcher C."/>
            <person name="Quail M.A."/>
            <person name="Chillingworth T."/>
            <person name="Feltwell T."/>
            <person name="Fraser A."/>
            <person name="Goodhead I."/>
            <person name="Hance Z."/>
            <person name="Jagels K."/>
            <person name="Larke N."/>
            <person name="Maddison M."/>
            <person name="Moule S."/>
            <person name="Mungall K."/>
            <person name="Norbertczak H."/>
            <person name="Rabbinowitsch E."/>
            <person name="Sanders M."/>
            <person name="Simmonds M."/>
            <person name="White B."/>
            <person name="Whithead S."/>
            <person name="Parkhill J."/>
        </authorList>
    </citation>
    <scope>NUCLEOTIDE SEQUENCE [LARGE SCALE GENOMIC DNA]</scope>
    <source>
        <strain>Hall / ATCC 3502 / NCTC 13319 / Type A</strain>
    </source>
</reference>
<reference key="2">
    <citation type="journal article" date="2007" name="PLoS ONE">
        <title>Analysis of the neurotoxin complex genes in Clostridium botulinum A1-A4 and B1 strains: BoNT/A3, /Ba4 and /B1 clusters are located within plasmids.</title>
        <authorList>
            <person name="Smith T.J."/>
            <person name="Hill K.K."/>
            <person name="Foley B.T."/>
            <person name="Detter J.C."/>
            <person name="Munk A.C."/>
            <person name="Bruce D.C."/>
            <person name="Doggett N.A."/>
            <person name="Smith L.A."/>
            <person name="Marks J.D."/>
            <person name="Xie G."/>
            <person name="Brettin T.S."/>
        </authorList>
    </citation>
    <scope>NUCLEOTIDE SEQUENCE [LARGE SCALE GENOMIC DNA]</scope>
    <source>
        <strain>Hall / ATCC 3502 / NCTC 13319 / Type A</strain>
    </source>
</reference>
<accession>A5I6W0</accession>
<accession>A7G845</accession>
<organism>
    <name type="scientific">Clostridium botulinum (strain Hall / ATCC 3502 / NCTC 13319 / Type A)</name>
    <dbReference type="NCBI Taxonomy" id="441771"/>
    <lineage>
        <taxon>Bacteria</taxon>
        <taxon>Bacillati</taxon>
        <taxon>Bacillota</taxon>
        <taxon>Clostridia</taxon>
        <taxon>Eubacteriales</taxon>
        <taxon>Clostridiaceae</taxon>
        <taxon>Clostridium</taxon>
    </lineage>
</organism>
<dbReference type="EMBL" id="CP000727">
    <property type="protein sequence ID" value="ABS36889.1"/>
    <property type="molecule type" value="Genomic_DNA"/>
</dbReference>
<dbReference type="EMBL" id="AM412317">
    <property type="protein sequence ID" value="CAL84792.1"/>
    <property type="molecule type" value="Genomic_DNA"/>
</dbReference>
<dbReference type="RefSeq" id="WP_003357457.1">
    <property type="nucleotide sequence ID" value="NC_009698.1"/>
</dbReference>
<dbReference type="RefSeq" id="YP_001255720.1">
    <property type="nucleotide sequence ID" value="NC_009495.1"/>
</dbReference>
<dbReference type="RefSeq" id="YP_001388960.1">
    <property type="nucleotide sequence ID" value="NC_009698.1"/>
</dbReference>
<dbReference type="SMR" id="A5I6W0"/>
<dbReference type="GeneID" id="5187485"/>
<dbReference type="KEGG" id="cbh:CLC_3141"/>
<dbReference type="KEGG" id="cbo:CBO3230"/>
<dbReference type="PATRIC" id="fig|413999.7.peg.3209"/>
<dbReference type="HOGENOM" id="CLU_014218_8_2_9"/>
<dbReference type="PRO" id="PR:A5I6W0"/>
<dbReference type="Proteomes" id="UP000001986">
    <property type="component" value="Chromosome"/>
</dbReference>
<dbReference type="GO" id="GO:0009376">
    <property type="term" value="C:HslUV protease complex"/>
    <property type="evidence" value="ECO:0000318"/>
    <property type="project" value="GO_Central"/>
</dbReference>
<dbReference type="GO" id="GO:0005524">
    <property type="term" value="F:ATP binding"/>
    <property type="evidence" value="ECO:0000318"/>
    <property type="project" value="GO_Central"/>
</dbReference>
<dbReference type="GO" id="GO:0016887">
    <property type="term" value="F:ATP hydrolysis activity"/>
    <property type="evidence" value="ECO:0000318"/>
    <property type="project" value="GO_Central"/>
</dbReference>
<dbReference type="GO" id="GO:0140662">
    <property type="term" value="F:ATP-dependent protein folding chaperone"/>
    <property type="evidence" value="ECO:0007669"/>
    <property type="project" value="InterPro"/>
</dbReference>
<dbReference type="GO" id="GO:0046983">
    <property type="term" value="F:protein dimerization activity"/>
    <property type="evidence" value="ECO:0007669"/>
    <property type="project" value="InterPro"/>
</dbReference>
<dbReference type="GO" id="GO:0051082">
    <property type="term" value="F:unfolded protein binding"/>
    <property type="evidence" value="ECO:0007669"/>
    <property type="project" value="UniProtKB-UniRule"/>
</dbReference>
<dbReference type="GO" id="GO:0008270">
    <property type="term" value="F:zinc ion binding"/>
    <property type="evidence" value="ECO:0007669"/>
    <property type="project" value="InterPro"/>
</dbReference>
<dbReference type="GO" id="GO:0051301">
    <property type="term" value="P:cell division"/>
    <property type="evidence" value="ECO:0000318"/>
    <property type="project" value="GO_Central"/>
</dbReference>
<dbReference type="GO" id="GO:0051603">
    <property type="term" value="P:proteolysis involved in protein catabolic process"/>
    <property type="evidence" value="ECO:0000318"/>
    <property type="project" value="GO_Central"/>
</dbReference>
<dbReference type="CDD" id="cd19497">
    <property type="entry name" value="RecA-like_ClpX"/>
    <property type="match status" value="1"/>
</dbReference>
<dbReference type="FunFam" id="1.10.8.60:FF:000002">
    <property type="entry name" value="ATP-dependent Clp protease ATP-binding subunit ClpX"/>
    <property type="match status" value="1"/>
</dbReference>
<dbReference type="FunFam" id="3.40.50.300:FF:000005">
    <property type="entry name" value="ATP-dependent Clp protease ATP-binding subunit ClpX"/>
    <property type="match status" value="1"/>
</dbReference>
<dbReference type="Gene3D" id="1.10.8.60">
    <property type="match status" value="1"/>
</dbReference>
<dbReference type="Gene3D" id="6.20.220.10">
    <property type="entry name" value="ClpX chaperone, C4-type zinc finger domain"/>
    <property type="match status" value="1"/>
</dbReference>
<dbReference type="Gene3D" id="3.40.50.300">
    <property type="entry name" value="P-loop containing nucleotide triphosphate hydrolases"/>
    <property type="match status" value="1"/>
</dbReference>
<dbReference type="HAMAP" id="MF_00175">
    <property type="entry name" value="ClpX"/>
    <property type="match status" value="1"/>
</dbReference>
<dbReference type="InterPro" id="IPR003593">
    <property type="entry name" value="AAA+_ATPase"/>
</dbReference>
<dbReference type="InterPro" id="IPR050052">
    <property type="entry name" value="ATP-dep_Clp_protease_ClpX"/>
</dbReference>
<dbReference type="InterPro" id="IPR003959">
    <property type="entry name" value="ATPase_AAA_core"/>
</dbReference>
<dbReference type="InterPro" id="IPR019489">
    <property type="entry name" value="Clp_ATPase_C"/>
</dbReference>
<dbReference type="InterPro" id="IPR004487">
    <property type="entry name" value="Clp_protease_ATP-bd_su_ClpX"/>
</dbReference>
<dbReference type="InterPro" id="IPR046425">
    <property type="entry name" value="ClpX_bact"/>
</dbReference>
<dbReference type="InterPro" id="IPR027417">
    <property type="entry name" value="P-loop_NTPase"/>
</dbReference>
<dbReference type="InterPro" id="IPR010603">
    <property type="entry name" value="Znf_CppX_C4"/>
</dbReference>
<dbReference type="InterPro" id="IPR038366">
    <property type="entry name" value="Znf_CppX_C4_sf"/>
</dbReference>
<dbReference type="NCBIfam" id="TIGR00382">
    <property type="entry name" value="clpX"/>
    <property type="match status" value="1"/>
</dbReference>
<dbReference type="NCBIfam" id="NF003745">
    <property type="entry name" value="PRK05342.1"/>
    <property type="match status" value="1"/>
</dbReference>
<dbReference type="PANTHER" id="PTHR48102:SF7">
    <property type="entry name" value="ATP-DEPENDENT CLP PROTEASE ATP-BINDING SUBUNIT CLPX-LIKE, MITOCHONDRIAL"/>
    <property type="match status" value="1"/>
</dbReference>
<dbReference type="PANTHER" id="PTHR48102">
    <property type="entry name" value="ATP-DEPENDENT CLP PROTEASE ATP-BINDING SUBUNIT CLPX-LIKE, MITOCHONDRIAL-RELATED"/>
    <property type="match status" value="1"/>
</dbReference>
<dbReference type="Pfam" id="PF07724">
    <property type="entry name" value="AAA_2"/>
    <property type="match status" value="1"/>
</dbReference>
<dbReference type="Pfam" id="PF10431">
    <property type="entry name" value="ClpB_D2-small"/>
    <property type="match status" value="1"/>
</dbReference>
<dbReference type="Pfam" id="PF06689">
    <property type="entry name" value="zf-C4_ClpX"/>
    <property type="match status" value="1"/>
</dbReference>
<dbReference type="SMART" id="SM00382">
    <property type="entry name" value="AAA"/>
    <property type="match status" value="1"/>
</dbReference>
<dbReference type="SMART" id="SM01086">
    <property type="entry name" value="ClpB_D2-small"/>
    <property type="match status" value="1"/>
</dbReference>
<dbReference type="SMART" id="SM00994">
    <property type="entry name" value="zf-C4_ClpX"/>
    <property type="match status" value="1"/>
</dbReference>
<dbReference type="SUPFAM" id="SSF57716">
    <property type="entry name" value="Glucocorticoid receptor-like (DNA-binding domain)"/>
    <property type="match status" value="1"/>
</dbReference>
<dbReference type="SUPFAM" id="SSF52540">
    <property type="entry name" value="P-loop containing nucleoside triphosphate hydrolases"/>
    <property type="match status" value="1"/>
</dbReference>
<dbReference type="PROSITE" id="PS51902">
    <property type="entry name" value="CLPX_ZB"/>
    <property type="match status" value="1"/>
</dbReference>
<proteinExistence type="inferred from homology"/>
<comment type="function">
    <text evidence="1">ATP-dependent specificity component of the Clp protease. It directs the protease to specific substrates. Can perform chaperone functions in the absence of ClpP.</text>
</comment>
<comment type="subunit">
    <text evidence="1">Component of the ClpX-ClpP complex. Forms a hexameric ring that, in the presence of ATP, binds to fourteen ClpP subunits assembled into a disk-like structure with a central cavity, resembling the structure of eukaryotic proteasomes.</text>
</comment>
<comment type="similarity">
    <text evidence="1">Belongs to the ClpX chaperone family.</text>
</comment>
<feature type="chain" id="PRO_1000058334" description="ATP-dependent Clp protease ATP-binding subunit ClpX">
    <location>
        <begin position="1"/>
        <end position="429"/>
    </location>
</feature>
<feature type="domain" description="ClpX-type ZB" evidence="2">
    <location>
        <begin position="1"/>
        <end position="53"/>
    </location>
</feature>
<feature type="region of interest" description="Disordered" evidence="3">
    <location>
        <begin position="408"/>
        <end position="429"/>
    </location>
</feature>
<feature type="compositionally biased region" description="Basic residues" evidence="3">
    <location>
        <begin position="413"/>
        <end position="423"/>
    </location>
</feature>
<feature type="binding site" evidence="2">
    <location>
        <position position="12"/>
    </location>
    <ligand>
        <name>Zn(2+)</name>
        <dbReference type="ChEBI" id="CHEBI:29105"/>
    </ligand>
</feature>
<feature type="binding site" evidence="2">
    <location>
        <position position="15"/>
    </location>
    <ligand>
        <name>Zn(2+)</name>
        <dbReference type="ChEBI" id="CHEBI:29105"/>
    </ligand>
</feature>
<feature type="binding site" evidence="2">
    <location>
        <position position="34"/>
    </location>
    <ligand>
        <name>Zn(2+)</name>
        <dbReference type="ChEBI" id="CHEBI:29105"/>
    </ligand>
</feature>
<feature type="binding site" evidence="2">
    <location>
        <position position="37"/>
    </location>
    <ligand>
        <name>Zn(2+)</name>
        <dbReference type="ChEBI" id="CHEBI:29105"/>
    </ligand>
</feature>
<feature type="binding site" evidence="1">
    <location>
        <begin position="116"/>
        <end position="123"/>
    </location>
    <ligand>
        <name>ATP</name>
        <dbReference type="ChEBI" id="CHEBI:30616"/>
    </ligand>
</feature>
<keyword id="KW-0067">ATP-binding</keyword>
<keyword id="KW-0143">Chaperone</keyword>
<keyword id="KW-0479">Metal-binding</keyword>
<keyword id="KW-0547">Nucleotide-binding</keyword>
<keyword id="KW-1185">Reference proteome</keyword>
<keyword id="KW-0862">Zinc</keyword>